<dbReference type="EMBL" id="AY243312">
    <property type="protein sequence ID" value="AAO89286.1"/>
    <property type="molecule type" value="Genomic_DNA"/>
</dbReference>
<dbReference type="EMBL" id="AY243312">
    <property type="protein sequence ID" value="AAO89491.1"/>
    <property type="molecule type" value="Genomic_DNA"/>
</dbReference>
<dbReference type="RefSeq" id="YP_232889.1">
    <property type="nucleotide sequence ID" value="NC_006998.1"/>
</dbReference>
<dbReference type="RefSeq" id="YP_233094.1">
    <property type="nucleotide sequence ID" value="NC_006998.1"/>
</dbReference>
<dbReference type="DNASU" id="3707589"/>
<dbReference type="DNASU" id="3707622"/>
<dbReference type="GeneID" id="3707589"/>
<dbReference type="GeneID" id="3707622"/>
<dbReference type="KEGG" id="vg:3707589"/>
<dbReference type="KEGG" id="vg:3707622"/>
<dbReference type="Proteomes" id="UP000000344">
    <property type="component" value="Genome"/>
</dbReference>
<proteinExistence type="predicted"/>
<organismHost>
    <name type="scientific">Bos taurus</name>
    <name type="common">Bovine</name>
    <dbReference type="NCBI Taxonomy" id="9913"/>
</organismHost>
<name>C20L_VACCW</name>
<keyword id="KW-1185">Reference proteome</keyword>
<sequence>MLFYLEEPIRGYVIILIVHPSWNDCATGHILIMLLNWHEQKEEGQHLLYLFIKHNQGYTLNILRYLLDRFDIQKDEYYNTAFQNCNNNVASYIGYDINLPTKDGIRLGV</sequence>
<accession>Q805M1</accession>
<gene>
    <name type="ordered locus">VACWR007</name>
    <name type="ORF">C20L</name>
</gene>
<gene>
    <name type="ordered locus">VACWR212</name>
    <name type="ORF">B26R</name>
</gene>
<organism>
    <name type="scientific">Vaccinia virus (strain Western Reserve)</name>
    <name type="common">VACV</name>
    <name type="synonym">Vaccinia virus (strain WR)</name>
    <dbReference type="NCBI Taxonomy" id="10254"/>
    <lineage>
        <taxon>Viruses</taxon>
        <taxon>Varidnaviria</taxon>
        <taxon>Bamfordvirae</taxon>
        <taxon>Nucleocytoviricota</taxon>
        <taxon>Pokkesviricetes</taxon>
        <taxon>Chitovirales</taxon>
        <taxon>Poxviridae</taxon>
        <taxon>Chordopoxvirinae</taxon>
        <taxon>Orthopoxvirus</taxon>
        <taxon>Vaccinia virus</taxon>
    </lineage>
</organism>
<protein>
    <recommendedName>
        <fullName>Uncharacterized protein C20L</fullName>
    </recommendedName>
</protein>
<feature type="chain" id="PRO_0000412981" description="Uncharacterized protein C20L">
    <location>
        <begin position="1"/>
        <end position="109"/>
    </location>
</feature>
<reference key="1">
    <citation type="submission" date="2003-02" db="EMBL/GenBank/DDBJ databases">
        <title>Sequencing of the coding region of Vaccinia-WR to an average 9-fold redundancy and an error rate of 0.16/10kb.</title>
        <authorList>
            <person name="Esposito J.J."/>
            <person name="Frace A.M."/>
            <person name="Sammons S.A."/>
            <person name="Olsen-Rasmussen M."/>
            <person name="Osborne J."/>
            <person name="Wohlhueter R."/>
        </authorList>
    </citation>
    <scope>NUCLEOTIDE SEQUENCE [GENOMIC DNA]</scope>
</reference>